<proteinExistence type="inferred from homology"/>
<keyword id="KW-0067">ATP-binding</keyword>
<keyword id="KW-0436">Ligase</keyword>
<keyword id="KW-0460">Magnesium</keyword>
<keyword id="KW-0479">Metal-binding</keyword>
<keyword id="KW-0547">Nucleotide-binding</keyword>
<keyword id="KW-0816">Tricarboxylic acid cycle</keyword>
<name>SUCC_CHLTA</name>
<gene>
    <name evidence="1" type="primary">sucC</name>
    <name type="ordered locus">CTA_0895</name>
</gene>
<organism>
    <name type="scientific">Chlamydia trachomatis serovar A (strain ATCC VR-571B / DSM 19440 / HAR-13)</name>
    <dbReference type="NCBI Taxonomy" id="315277"/>
    <lineage>
        <taxon>Bacteria</taxon>
        <taxon>Pseudomonadati</taxon>
        <taxon>Chlamydiota</taxon>
        <taxon>Chlamydiia</taxon>
        <taxon>Chlamydiales</taxon>
        <taxon>Chlamydiaceae</taxon>
        <taxon>Chlamydia/Chlamydophila group</taxon>
        <taxon>Chlamydia</taxon>
    </lineage>
</organism>
<reference key="1">
    <citation type="journal article" date="2005" name="Infect. Immun.">
        <title>Comparative genomic analysis of Chlamydia trachomatis oculotropic and genitotropic strains.</title>
        <authorList>
            <person name="Carlson J.H."/>
            <person name="Porcella S.F."/>
            <person name="McClarty G."/>
            <person name="Caldwell H.D."/>
        </authorList>
    </citation>
    <scope>NUCLEOTIDE SEQUENCE [LARGE SCALE GENOMIC DNA]</scope>
    <source>
        <strain>ATCC VR-571B / DSM 19440 / HAR-13</strain>
    </source>
</reference>
<comment type="function">
    <text evidence="1">Succinyl-CoA synthetase functions in the citric acid cycle (TCA), coupling the hydrolysis of succinyl-CoA to the synthesis of either ATP or GTP and thus represents the only step of substrate-level phosphorylation in the TCA. The beta subunit provides nucleotide specificity of the enzyme and binds the substrate succinate, while the binding sites for coenzyme A and phosphate are found in the alpha subunit.</text>
</comment>
<comment type="catalytic activity">
    <reaction evidence="1">
        <text>succinate + ATP + CoA = succinyl-CoA + ADP + phosphate</text>
        <dbReference type="Rhea" id="RHEA:17661"/>
        <dbReference type="ChEBI" id="CHEBI:30031"/>
        <dbReference type="ChEBI" id="CHEBI:30616"/>
        <dbReference type="ChEBI" id="CHEBI:43474"/>
        <dbReference type="ChEBI" id="CHEBI:57287"/>
        <dbReference type="ChEBI" id="CHEBI:57292"/>
        <dbReference type="ChEBI" id="CHEBI:456216"/>
        <dbReference type="EC" id="6.2.1.5"/>
    </reaction>
    <physiologicalReaction direction="right-to-left" evidence="1">
        <dbReference type="Rhea" id="RHEA:17663"/>
    </physiologicalReaction>
</comment>
<comment type="catalytic activity">
    <reaction evidence="1">
        <text>GTP + succinate + CoA = succinyl-CoA + GDP + phosphate</text>
        <dbReference type="Rhea" id="RHEA:22120"/>
        <dbReference type="ChEBI" id="CHEBI:30031"/>
        <dbReference type="ChEBI" id="CHEBI:37565"/>
        <dbReference type="ChEBI" id="CHEBI:43474"/>
        <dbReference type="ChEBI" id="CHEBI:57287"/>
        <dbReference type="ChEBI" id="CHEBI:57292"/>
        <dbReference type="ChEBI" id="CHEBI:58189"/>
    </reaction>
    <physiologicalReaction direction="right-to-left" evidence="1">
        <dbReference type="Rhea" id="RHEA:22122"/>
    </physiologicalReaction>
</comment>
<comment type="cofactor">
    <cofactor evidence="1">
        <name>Mg(2+)</name>
        <dbReference type="ChEBI" id="CHEBI:18420"/>
    </cofactor>
    <text evidence="1">Binds 1 Mg(2+) ion per subunit.</text>
</comment>
<comment type="pathway">
    <text evidence="1">Carbohydrate metabolism; tricarboxylic acid cycle; succinate from succinyl-CoA (ligase route): step 1/1.</text>
</comment>
<comment type="subunit">
    <text evidence="1">Heterotetramer of two alpha and two beta subunits.</text>
</comment>
<comment type="similarity">
    <text evidence="1">Belongs to the succinate/malate CoA ligase beta subunit family.</text>
</comment>
<feature type="chain" id="PRO_1000082063" description="Succinate--CoA ligase [ADP-forming] subunit beta">
    <location>
        <begin position="1"/>
        <end position="386"/>
    </location>
</feature>
<feature type="domain" description="ATP-grasp" evidence="1">
    <location>
        <begin position="9"/>
        <end position="244"/>
    </location>
</feature>
<feature type="binding site" evidence="1">
    <location>
        <position position="46"/>
    </location>
    <ligand>
        <name>ATP</name>
        <dbReference type="ChEBI" id="CHEBI:30616"/>
    </ligand>
</feature>
<feature type="binding site" evidence="1">
    <location>
        <begin position="53"/>
        <end position="55"/>
    </location>
    <ligand>
        <name>ATP</name>
        <dbReference type="ChEBI" id="CHEBI:30616"/>
    </ligand>
</feature>
<feature type="binding site" evidence="1">
    <location>
        <position position="102"/>
    </location>
    <ligand>
        <name>ATP</name>
        <dbReference type="ChEBI" id="CHEBI:30616"/>
    </ligand>
</feature>
<feature type="binding site" evidence="1">
    <location>
        <position position="107"/>
    </location>
    <ligand>
        <name>ATP</name>
        <dbReference type="ChEBI" id="CHEBI:30616"/>
    </ligand>
</feature>
<feature type="binding site" evidence="1">
    <location>
        <position position="199"/>
    </location>
    <ligand>
        <name>Mg(2+)</name>
        <dbReference type="ChEBI" id="CHEBI:18420"/>
    </ligand>
</feature>
<feature type="binding site" evidence="1">
    <location>
        <position position="213"/>
    </location>
    <ligand>
        <name>Mg(2+)</name>
        <dbReference type="ChEBI" id="CHEBI:18420"/>
    </ligand>
</feature>
<feature type="binding site" evidence="1">
    <location>
        <position position="264"/>
    </location>
    <ligand>
        <name>substrate</name>
        <note>ligand shared with subunit alpha</note>
    </ligand>
</feature>
<feature type="binding site" evidence="1">
    <location>
        <begin position="321"/>
        <end position="323"/>
    </location>
    <ligand>
        <name>substrate</name>
        <note>ligand shared with subunit alpha</note>
    </ligand>
</feature>
<dbReference type="EC" id="6.2.1.5" evidence="1"/>
<dbReference type="EMBL" id="CP000051">
    <property type="protein sequence ID" value="AAX51104.1"/>
    <property type="molecule type" value="Genomic_DNA"/>
</dbReference>
<dbReference type="RefSeq" id="WP_009872958.1">
    <property type="nucleotide sequence ID" value="NC_007429.1"/>
</dbReference>
<dbReference type="SMR" id="Q3KKL8"/>
<dbReference type="KEGG" id="cta:CTA_0895"/>
<dbReference type="HOGENOM" id="CLU_037430_0_2_0"/>
<dbReference type="UniPathway" id="UPA00223">
    <property type="reaction ID" value="UER00999"/>
</dbReference>
<dbReference type="Proteomes" id="UP000002532">
    <property type="component" value="Chromosome"/>
</dbReference>
<dbReference type="GO" id="GO:0005829">
    <property type="term" value="C:cytosol"/>
    <property type="evidence" value="ECO:0007669"/>
    <property type="project" value="TreeGrafter"/>
</dbReference>
<dbReference type="GO" id="GO:0042709">
    <property type="term" value="C:succinate-CoA ligase complex"/>
    <property type="evidence" value="ECO:0007669"/>
    <property type="project" value="TreeGrafter"/>
</dbReference>
<dbReference type="GO" id="GO:0005524">
    <property type="term" value="F:ATP binding"/>
    <property type="evidence" value="ECO:0007669"/>
    <property type="project" value="UniProtKB-UniRule"/>
</dbReference>
<dbReference type="GO" id="GO:0000287">
    <property type="term" value="F:magnesium ion binding"/>
    <property type="evidence" value="ECO:0007669"/>
    <property type="project" value="UniProtKB-UniRule"/>
</dbReference>
<dbReference type="GO" id="GO:0004775">
    <property type="term" value="F:succinate-CoA ligase (ADP-forming) activity"/>
    <property type="evidence" value="ECO:0007669"/>
    <property type="project" value="UniProtKB-UniRule"/>
</dbReference>
<dbReference type="GO" id="GO:0004776">
    <property type="term" value="F:succinate-CoA ligase (GDP-forming) activity"/>
    <property type="evidence" value="ECO:0007669"/>
    <property type="project" value="RHEA"/>
</dbReference>
<dbReference type="GO" id="GO:0006104">
    <property type="term" value="P:succinyl-CoA metabolic process"/>
    <property type="evidence" value="ECO:0007669"/>
    <property type="project" value="TreeGrafter"/>
</dbReference>
<dbReference type="GO" id="GO:0006099">
    <property type="term" value="P:tricarboxylic acid cycle"/>
    <property type="evidence" value="ECO:0007669"/>
    <property type="project" value="UniProtKB-UniRule"/>
</dbReference>
<dbReference type="FunFam" id="3.30.470.20:FF:000002">
    <property type="entry name" value="Succinate--CoA ligase [ADP-forming] subunit beta"/>
    <property type="match status" value="1"/>
</dbReference>
<dbReference type="FunFam" id="3.40.50.261:FF:000019">
    <property type="entry name" value="Succinate--CoA ligase [ADP-forming] subunit beta"/>
    <property type="match status" value="1"/>
</dbReference>
<dbReference type="Gene3D" id="3.30.1490.20">
    <property type="entry name" value="ATP-grasp fold, A domain"/>
    <property type="match status" value="1"/>
</dbReference>
<dbReference type="Gene3D" id="3.30.470.20">
    <property type="entry name" value="ATP-grasp fold, B domain"/>
    <property type="match status" value="1"/>
</dbReference>
<dbReference type="Gene3D" id="3.40.50.261">
    <property type="entry name" value="Succinyl-CoA synthetase domains"/>
    <property type="match status" value="1"/>
</dbReference>
<dbReference type="HAMAP" id="MF_00558">
    <property type="entry name" value="Succ_CoA_beta"/>
    <property type="match status" value="1"/>
</dbReference>
<dbReference type="InterPro" id="IPR011761">
    <property type="entry name" value="ATP-grasp"/>
</dbReference>
<dbReference type="InterPro" id="IPR013650">
    <property type="entry name" value="ATP-grasp_succ-CoA_synth-type"/>
</dbReference>
<dbReference type="InterPro" id="IPR013815">
    <property type="entry name" value="ATP_grasp_subdomain_1"/>
</dbReference>
<dbReference type="InterPro" id="IPR017866">
    <property type="entry name" value="Succ-CoA_synthase_bsu_CS"/>
</dbReference>
<dbReference type="InterPro" id="IPR005811">
    <property type="entry name" value="SUCC_ACL_C"/>
</dbReference>
<dbReference type="InterPro" id="IPR005809">
    <property type="entry name" value="Succ_CoA_ligase-like_bsu"/>
</dbReference>
<dbReference type="InterPro" id="IPR016102">
    <property type="entry name" value="Succinyl-CoA_synth-like"/>
</dbReference>
<dbReference type="NCBIfam" id="NF001913">
    <property type="entry name" value="PRK00696.1"/>
    <property type="match status" value="1"/>
</dbReference>
<dbReference type="NCBIfam" id="TIGR01016">
    <property type="entry name" value="sucCoAbeta"/>
    <property type="match status" value="1"/>
</dbReference>
<dbReference type="PANTHER" id="PTHR11815:SF10">
    <property type="entry name" value="SUCCINATE--COA LIGASE [GDP-FORMING] SUBUNIT BETA, MITOCHONDRIAL"/>
    <property type="match status" value="1"/>
</dbReference>
<dbReference type="PANTHER" id="PTHR11815">
    <property type="entry name" value="SUCCINYL-COA SYNTHETASE BETA CHAIN"/>
    <property type="match status" value="1"/>
</dbReference>
<dbReference type="Pfam" id="PF08442">
    <property type="entry name" value="ATP-grasp_2"/>
    <property type="match status" value="1"/>
</dbReference>
<dbReference type="Pfam" id="PF00549">
    <property type="entry name" value="Ligase_CoA"/>
    <property type="match status" value="1"/>
</dbReference>
<dbReference type="PIRSF" id="PIRSF001554">
    <property type="entry name" value="SucCS_beta"/>
    <property type="match status" value="1"/>
</dbReference>
<dbReference type="SUPFAM" id="SSF56059">
    <property type="entry name" value="Glutathione synthetase ATP-binding domain-like"/>
    <property type="match status" value="1"/>
</dbReference>
<dbReference type="SUPFAM" id="SSF52210">
    <property type="entry name" value="Succinyl-CoA synthetase domains"/>
    <property type="match status" value="1"/>
</dbReference>
<dbReference type="PROSITE" id="PS50975">
    <property type="entry name" value="ATP_GRASP"/>
    <property type="match status" value="1"/>
</dbReference>
<dbReference type="PROSITE" id="PS01217">
    <property type="entry name" value="SUCCINYL_COA_LIG_3"/>
    <property type="match status" value="1"/>
</dbReference>
<sequence length="386" mass="41863">MHLHEYQAKDLLTAYQLPIPPYHVATSVPEVETAIQAEQWKAGVVKAQVHAGGRGKNGGVVIAHSPEDLLAAADKLLHMQFSSNQTAGLSLPINKVLISPLVEIASEYYLAIVIDRKHRCPVIMLSKAGGVDIEEVAEKQPDQLLKMTLPSSGKIYGYQLRRIAKFMEWDQPIADQGNRIIRQLLQCFYEKDASLLEINPLVLTKDGSLVILDAKMTIDDNALYRHPQLADCYDPSQENIRDVLAKQLGLSYIALDGTIGCLVNGAGLAMSTLDILKLYGGSAANFLDVGGSASEKQIQEAISLVLSDKSVRVLFIHIFGGIMDCAVVASGLVSAMQGQKETIPTVIRLEGTNVDKGKDMIINAGIPCEFVTSMSEGAELAVQLSR</sequence>
<accession>Q3KKL8</accession>
<protein>
    <recommendedName>
        <fullName evidence="1">Succinate--CoA ligase [ADP-forming] subunit beta</fullName>
        <ecNumber evidence="1">6.2.1.5</ecNumber>
    </recommendedName>
    <alternativeName>
        <fullName evidence="1">Succinyl-CoA synthetase subunit beta</fullName>
        <shortName evidence="1">SCS-beta</shortName>
    </alternativeName>
</protein>
<evidence type="ECO:0000255" key="1">
    <source>
        <dbReference type="HAMAP-Rule" id="MF_00558"/>
    </source>
</evidence>